<organism>
    <name type="scientific">Aquifex aeolicus (strain VF5)</name>
    <dbReference type="NCBI Taxonomy" id="224324"/>
    <lineage>
        <taxon>Bacteria</taxon>
        <taxon>Pseudomonadati</taxon>
        <taxon>Aquificota</taxon>
        <taxon>Aquificia</taxon>
        <taxon>Aquificales</taxon>
        <taxon>Aquificaceae</taxon>
        <taxon>Aquifex</taxon>
    </lineage>
</organism>
<sequence>MRWIEEELKRIKEANLYRERILLEGVKDFCSNDYLGLRKHPEVVEESIRVLKEAGLGSGASQLVSGYTKHHRELEEKLAEFKGTESCVLFGSGFLANVGTIPALVEEGDLVLSDELNHASIIDGVRLSKAQKRVFKHKDYEELEEFLKKNRKKFRRVLIITDTVFSMDGDVADLKRLTQICEEYDCMLYIDEAHTTGTIGKGGLDYFGIEHKEYIIVMGTLSKALGSYGAFVCGTKLLIDYLVNKARSLIFSTSLPPSVCAGAKKAIEIIEENPKLIEFLRKKEKEILEILEQFSLDYKYYSTPIIPIMVYDEKETVRIKEELLKEGVFIQAIRYPTVPKGKARLRLTASLNYTRKDLEFLKNALEKVLKGRA</sequence>
<keyword id="KW-0093">Biotin biosynthesis</keyword>
<keyword id="KW-0663">Pyridoxal phosphate</keyword>
<keyword id="KW-1185">Reference proteome</keyword>
<keyword id="KW-0808">Transferase</keyword>
<name>BIOF_AQUAE</name>
<proteinExistence type="inferred from homology"/>
<accession>O66875</accession>
<reference key="1">
    <citation type="journal article" date="1998" name="Nature">
        <title>The complete genome of the hyperthermophilic bacterium Aquifex aeolicus.</title>
        <authorList>
            <person name="Deckert G."/>
            <person name="Warren P.V."/>
            <person name="Gaasterland T."/>
            <person name="Young W.G."/>
            <person name="Lenox A.L."/>
            <person name="Graham D.E."/>
            <person name="Overbeek R."/>
            <person name="Snead M.A."/>
            <person name="Keller M."/>
            <person name="Aujay M."/>
            <person name="Huber R."/>
            <person name="Feldman R.A."/>
            <person name="Short J.M."/>
            <person name="Olsen G.J."/>
            <person name="Swanson R.V."/>
        </authorList>
    </citation>
    <scope>NUCLEOTIDE SEQUENCE [LARGE SCALE GENOMIC DNA]</scope>
    <source>
        <strain>VF5</strain>
    </source>
</reference>
<evidence type="ECO:0000250" key="1"/>
<evidence type="ECO:0000305" key="2"/>
<dbReference type="EC" id="2.3.1.47"/>
<dbReference type="EMBL" id="AE000657">
    <property type="protein sequence ID" value="AAC06836.1"/>
    <property type="molecule type" value="Genomic_DNA"/>
</dbReference>
<dbReference type="PIR" id="G70355">
    <property type="entry name" value="G70355"/>
</dbReference>
<dbReference type="RefSeq" id="NP_213435.1">
    <property type="nucleotide sequence ID" value="NC_000918.1"/>
</dbReference>
<dbReference type="RefSeq" id="WP_010880373.1">
    <property type="nucleotide sequence ID" value="NC_000918.1"/>
</dbReference>
<dbReference type="SMR" id="O66875"/>
<dbReference type="FunCoup" id="O66875">
    <property type="interactions" value="327"/>
</dbReference>
<dbReference type="STRING" id="224324.aq_626"/>
<dbReference type="EnsemblBacteria" id="AAC06836">
    <property type="protein sequence ID" value="AAC06836"/>
    <property type="gene ID" value="aq_626"/>
</dbReference>
<dbReference type="KEGG" id="aae:aq_626"/>
<dbReference type="PATRIC" id="fig|224324.8.peg.508"/>
<dbReference type="eggNOG" id="COG0156">
    <property type="taxonomic scope" value="Bacteria"/>
</dbReference>
<dbReference type="HOGENOM" id="CLU_015846_11_0_0"/>
<dbReference type="InParanoid" id="O66875"/>
<dbReference type="OrthoDB" id="9807157at2"/>
<dbReference type="UniPathway" id="UPA00078"/>
<dbReference type="Proteomes" id="UP000000798">
    <property type="component" value="Chromosome"/>
</dbReference>
<dbReference type="GO" id="GO:0008710">
    <property type="term" value="F:8-amino-7-oxononanoate synthase activity"/>
    <property type="evidence" value="ECO:0007669"/>
    <property type="project" value="UniProtKB-EC"/>
</dbReference>
<dbReference type="GO" id="GO:0030170">
    <property type="term" value="F:pyridoxal phosphate binding"/>
    <property type="evidence" value="ECO:0007669"/>
    <property type="project" value="InterPro"/>
</dbReference>
<dbReference type="GO" id="GO:0009102">
    <property type="term" value="P:biotin biosynthetic process"/>
    <property type="evidence" value="ECO:0007669"/>
    <property type="project" value="UniProtKB-UniPathway"/>
</dbReference>
<dbReference type="CDD" id="cd06454">
    <property type="entry name" value="KBL_like"/>
    <property type="match status" value="1"/>
</dbReference>
<dbReference type="Gene3D" id="3.90.1150.10">
    <property type="entry name" value="Aspartate Aminotransferase, domain 1"/>
    <property type="match status" value="1"/>
</dbReference>
<dbReference type="Gene3D" id="3.40.640.10">
    <property type="entry name" value="Type I PLP-dependent aspartate aminotransferase-like (Major domain)"/>
    <property type="match status" value="1"/>
</dbReference>
<dbReference type="InterPro" id="IPR001917">
    <property type="entry name" value="Aminotrans_II_pyridoxalP_BS"/>
</dbReference>
<dbReference type="InterPro" id="IPR004839">
    <property type="entry name" value="Aminotransferase_I/II_large"/>
</dbReference>
<dbReference type="InterPro" id="IPR050087">
    <property type="entry name" value="AON_synthase_class-II"/>
</dbReference>
<dbReference type="InterPro" id="IPR004723">
    <property type="entry name" value="AONS_Archaea/Proteobacteria"/>
</dbReference>
<dbReference type="InterPro" id="IPR015424">
    <property type="entry name" value="PyrdxlP-dep_Trfase"/>
</dbReference>
<dbReference type="InterPro" id="IPR015421">
    <property type="entry name" value="PyrdxlP-dep_Trfase_major"/>
</dbReference>
<dbReference type="InterPro" id="IPR015422">
    <property type="entry name" value="PyrdxlP-dep_Trfase_small"/>
</dbReference>
<dbReference type="NCBIfam" id="TIGR00858">
    <property type="entry name" value="bioF"/>
    <property type="match status" value="1"/>
</dbReference>
<dbReference type="PANTHER" id="PTHR13693:SF77">
    <property type="entry name" value="8-AMINO-7-OXONONANOATE SYNTHASE"/>
    <property type="match status" value="1"/>
</dbReference>
<dbReference type="PANTHER" id="PTHR13693">
    <property type="entry name" value="CLASS II AMINOTRANSFERASE/8-AMINO-7-OXONONANOATE SYNTHASE"/>
    <property type="match status" value="1"/>
</dbReference>
<dbReference type="Pfam" id="PF00155">
    <property type="entry name" value="Aminotran_1_2"/>
    <property type="match status" value="1"/>
</dbReference>
<dbReference type="SUPFAM" id="SSF53383">
    <property type="entry name" value="PLP-dependent transferases"/>
    <property type="match status" value="1"/>
</dbReference>
<dbReference type="PROSITE" id="PS00599">
    <property type="entry name" value="AA_TRANSFER_CLASS_2"/>
    <property type="match status" value="1"/>
</dbReference>
<gene>
    <name type="primary">bioF</name>
    <name type="ordered locus">aq_626</name>
</gene>
<protein>
    <recommendedName>
        <fullName>Putative 8-amino-7-oxononanoate synthase</fullName>
        <shortName>AONS</shortName>
        <ecNumber>2.3.1.47</ecNumber>
    </recommendedName>
    <alternativeName>
        <fullName>7-keto-8-amino-pelargonic acid synthase</fullName>
        <shortName>7-KAP synthase</shortName>
    </alternativeName>
    <alternativeName>
        <fullName>8-amino-7-ketopelargonate synthase</fullName>
    </alternativeName>
</protein>
<feature type="chain" id="PRO_0000163807" description="Putative 8-amino-7-oxononanoate synthase">
    <location>
        <begin position="1"/>
        <end position="373"/>
    </location>
</feature>
<feature type="binding site" evidence="1">
    <location>
        <position position="18"/>
    </location>
    <ligand>
        <name>substrate</name>
    </ligand>
</feature>
<feature type="binding site" evidence="1">
    <location>
        <begin position="93"/>
        <end position="94"/>
    </location>
    <ligand>
        <name>pyridoxal 5'-phosphate</name>
        <dbReference type="ChEBI" id="CHEBI:597326"/>
    </ligand>
</feature>
<feature type="binding site" evidence="1">
    <location>
        <position position="118"/>
    </location>
    <ligand>
        <name>substrate</name>
    </ligand>
</feature>
<feature type="binding site" evidence="1">
    <location>
        <position position="166"/>
    </location>
    <ligand>
        <name>pyridoxal 5'-phosphate</name>
        <dbReference type="ChEBI" id="CHEBI:597326"/>
    </ligand>
</feature>
<feature type="binding site" evidence="1">
    <location>
        <begin position="191"/>
        <end position="194"/>
    </location>
    <ligand>
        <name>pyridoxal 5'-phosphate</name>
        <dbReference type="ChEBI" id="CHEBI:597326"/>
    </ligand>
</feature>
<feature type="binding site" evidence="1">
    <location>
        <begin position="220"/>
        <end position="223"/>
    </location>
    <ligand>
        <name>pyridoxal 5'-phosphate</name>
        <dbReference type="ChEBI" id="CHEBI:597326"/>
    </ligand>
</feature>
<feature type="binding site" evidence="1">
    <location>
        <position position="337"/>
    </location>
    <ligand>
        <name>substrate</name>
    </ligand>
</feature>
<feature type="modified residue" description="N6-(pyridoxal phosphate)lysine" evidence="1">
    <location>
        <position position="223"/>
    </location>
</feature>
<comment type="function">
    <text evidence="1">Catalyzes the decarboxylative condensation of pimeloyl-[acyl-carrier protein] and L-alanine to produce 8-amino-7-oxononanoate (AON), [acyl-carrier protein], and carbon dioxide.</text>
</comment>
<comment type="catalytic activity">
    <reaction>
        <text>6-carboxyhexanoyl-[ACP] + L-alanine + H(+) = (8S)-8-amino-7-oxononanoate + holo-[ACP] + CO2</text>
        <dbReference type="Rhea" id="RHEA:42288"/>
        <dbReference type="Rhea" id="RHEA-COMP:9685"/>
        <dbReference type="Rhea" id="RHEA-COMP:9955"/>
        <dbReference type="ChEBI" id="CHEBI:15378"/>
        <dbReference type="ChEBI" id="CHEBI:16526"/>
        <dbReference type="ChEBI" id="CHEBI:57972"/>
        <dbReference type="ChEBI" id="CHEBI:64479"/>
        <dbReference type="ChEBI" id="CHEBI:78846"/>
        <dbReference type="ChEBI" id="CHEBI:149468"/>
        <dbReference type="EC" id="2.3.1.47"/>
    </reaction>
</comment>
<comment type="cofactor">
    <cofactor evidence="1">
        <name>pyridoxal 5'-phosphate</name>
        <dbReference type="ChEBI" id="CHEBI:597326"/>
    </cofactor>
</comment>
<comment type="pathway">
    <text>Cofactor biosynthesis; biotin biosynthesis.</text>
</comment>
<comment type="subunit">
    <text evidence="1">Homodimer.</text>
</comment>
<comment type="similarity">
    <text evidence="2">Belongs to the class-II pyridoxal-phosphate-dependent aminotransferase family. BioF subfamily.</text>
</comment>